<protein>
    <recommendedName>
        <fullName>HssA/B-like protein 26</fullName>
    </recommendedName>
</protein>
<keyword id="KW-1185">Reference proteome</keyword>
<name>HSL26_DICDI</name>
<sequence>MTIIASISKIGNIKSSSSSSIGSGKSSAVSFGNSRIACGECGGSATGLLGNIANSGTGMVSQIPVTVMLDVNANANLNPSMSAVPAGNSCGCN</sequence>
<evidence type="ECO:0000305" key="1"/>
<reference key="1">
    <citation type="journal article" date="2002" name="Nature">
        <title>Sequence and analysis of chromosome 2 of Dictyostelium discoideum.</title>
        <authorList>
            <person name="Gloeckner G."/>
            <person name="Eichinger L."/>
            <person name="Szafranski K."/>
            <person name="Pachebat J.A."/>
            <person name="Bankier A.T."/>
            <person name="Dear P.H."/>
            <person name="Lehmann R."/>
            <person name="Baumgart C."/>
            <person name="Parra G."/>
            <person name="Abril J.F."/>
            <person name="Guigo R."/>
            <person name="Kumpf K."/>
            <person name="Tunggal B."/>
            <person name="Cox E.C."/>
            <person name="Quail M.A."/>
            <person name="Platzer M."/>
            <person name="Rosenthal A."/>
            <person name="Noegel A.A."/>
        </authorList>
    </citation>
    <scope>NUCLEOTIDE SEQUENCE [LARGE SCALE GENOMIC DNA]</scope>
    <source>
        <strain>AX4</strain>
    </source>
</reference>
<reference key="2">
    <citation type="journal article" date="2005" name="Nature">
        <title>The genome of the social amoeba Dictyostelium discoideum.</title>
        <authorList>
            <person name="Eichinger L."/>
            <person name="Pachebat J.A."/>
            <person name="Gloeckner G."/>
            <person name="Rajandream M.A."/>
            <person name="Sucgang R."/>
            <person name="Berriman M."/>
            <person name="Song J."/>
            <person name="Olsen R."/>
            <person name="Szafranski K."/>
            <person name="Xu Q."/>
            <person name="Tunggal B."/>
            <person name="Kummerfeld S."/>
            <person name="Madera M."/>
            <person name="Konfortov B.A."/>
            <person name="Rivero F."/>
            <person name="Bankier A.T."/>
            <person name="Lehmann R."/>
            <person name="Hamlin N."/>
            <person name="Davies R."/>
            <person name="Gaudet P."/>
            <person name="Fey P."/>
            <person name="Pilcher K."/>
            <person name="Chen G."/>
            <person name="Saunders D."/>
            <person name="Sodergren E.J."/>
            <person name="Davis P."/>
            <person name="Kerhornou A."/>
            <person name="Nie X."/>
            <person name="Hall N."/>
            <person name="Anjard C."/>
            <person name="Hemphill L."/>
            <person name="Bason N."/>
            <person name="Farbrother P."/>
            <person name="Desany B."/>
            <person name="Just E."/>
            <person name="Morio T."/>
            <person name="Rost R."/>
            <person name="Churcher C.M."/>
            <person name="Cooper J."/>
            <person name="Haydock S."/>
            <person name="van Driessche N."/>
            <person name="Cronin A."/>
            <person name="Goodhead I."/>
            <person name="Muzny D.M."/>
            <person name="Mourier T."/>
            <person name="Pain A."/>
            <person name="Lu M."/>
            <person name="Harper D."/>
            <person name="Lindsay R."/>
            <person name="Hauser H."/>
            <person name="James K.D."/>
            <person name="Quiles M."/>
            <person name="Madan Babu M."/>
            <person name="Saito T."/>
            <person name="Buchrieser C."/>
            <person name="Wardroper A."/>
            <person name="Felder M."/>
            <person name="Thangavelu M."/>
            <person name="Johnson D."/>
            <person name="Knights A."/>
            <person name="Loulseged H."/>
            <person name="Mungall K.L."/>
            <person name="Oliver K."/>
            <person name="Price C."/>
            <person name="Quail M.A."/>
            <person name="Urushihara H."/>
            <person name="Hernandez J."/>
            <person name="Rabbinowitsch E."/>
            <person name="Steffen D."/>
            <person name="Sanders M."/>
            <person name="Ma J."/>
            <person name="Kohara Y."/>
            <person name="Sharp S."/>
            <person name="Simmonds M.N."/>
            <person name="Spiegler S."/>
            <person name="Tivey A."/>
            <person name="Sugano S."/>
            <person name="White B."/>
            <person name="Walker D."/>
            <person name="Woodward J.R."/>
            <person name="Winckler T."/>
            <person name="Tanaka Y."/>
            <person name="Shaulsky G."/>
            <person name="Schleicher M."/>
            <person name="Weinstock G.M."/>
            <person name="Rosenthal A."/>
            <person name="Cox E.C."/>
            <person name="Chisholm R.L."/>
            <person name="Gibbs R.A."/>
            <person name="Loomis W.F."/>
            <person name="Platzer M."/>
            <person name="Kay R.R."/>
            <person name="Williams J.G."/>
            <person name="Dear P.H."/>
            <person name="Noegel A.A."/>
            <person name="Barrell B.G."/>
            <person name="Kuspa A."/>
        </authorList>
    </citation>
    <scope>NUCLEOTIDE SEQUENCE [LARGE SCALE GENOMIC DNA]</scope>
    <source>
        <strain>AX4</strain>
    </source>
</reference>
<proteinExistence type="inferred from homology"/>
<gene>
    <name type="primary">hssl26</name>
    <name type="ORF">DDB_G0275807</name>
</gene>
<dbReference type="EMBL" id="AAFI02000013">
    <property type="protein sequence ID" value="EAL69654.2"/>
    <property type="molecule type" value="Genomic_DNA"/>
</dbReference>
<dbReference type="RefSeq" id="XP_643414.2">
    <property type="nucleotide sequence ID" value="XM_638322.2"/>
</dbReference>
<dbReference type="FunCoup" id="Q86H91">
    <property type="interactions" value="62"/>
</dbReference>
<dbReference type="PaxDb" id="44689-DDB0252807"/>
<dbReference type="EnsemblProtists" id="EAL69654">
    <property type="protein sequence ID" value="EAL69654"/>
    <property type="gene ID" value="DDB_G0275807"/>
</dbReference>
<dbReference type="GeneID" id="8620000"/>
<dbReference type="KEGG" id="ddi:DDB_G0275807"/>
<dbReference type="dictyBase" id="DDB_G0275807"/>
<dbReference type="VEuPathDB" id="AmoebaDB:DDB_G0275807"/>
<dbReference type="HOGENOM" id="CLU_2404148_0_0_1"/>
<dbReference type="InParanoid" id="Q86H91"/>
<dbReference type="PRO" id="PR:Q86H91"/>
<dbReference type="Proteomes" id="UP000002195">
    <property type="component" value="Chromosome 2"/>
</dbReference>
<dbReference type="GO" id="GO:0030587">
    <property type="term" value="P:sorocarp development"/>
    <property type="evidence" value="ECO:0000318"/>
    <property type="project" value="GO_Central"/>
</dbReference>
<dbReference type="InterPro" id="IPR050533">
    <property type="entry name" value="HssA/B-like_chaperone"/>
</dbReference>
<dbReference type="InterPro" id="IPR008455">
    <property type="entry name" value="HssA/B-related"/>
</dbReference>
<dbReference type="PANTHER" id="PTHR31059">
    <property type="entry name" value="HSSA/B-LIKE PROTEIN 1-RELATED-RELATED"/>
    <property type="match status" value="1"/>
</dbReference>
<dbReference type="PANTHER" id="PTHR31059:SF5">
    <property type="entry name" value="HSSA_B-LIKE PROTEIN 1-RELATED"/>
    <property type="match status" value="1"/>
</dbReference>
<dbReference type="Pfam" id="PF05710">
    <property type="entry name" value="Coiled"/>
    <property type="match status" value="1"/>
</dbReference>
<accession>Q86H91</accession>
<accession>Q553J9</accession>
<comment type="similarity">
    <text evidence="1">Belongs to the hssA/B family.</text>
</comment>
<feature type="chain" id="PRO_0000330396" description="HssA/B-like protein 26">
    <location>
        <begin position="1"/>
        <end position="93"/>
    </location>
</feature>
<organism>
    <name type="scientific">Dictyostelium discoideum</name>
    <name type="common">Social amoeba</name>
    <dbReference type="NCBI Taxonomy" id="44689"/>
    <lineage>
        <taxon>Eukaryota</taxon>
        <taxon>Amoebozoa</taxon>
        <taxon>Evosea</taxon>
        <taxon>Eumycetozoa</taxon>
        <taxon>Dictyostelia</taxon>
        <taxon>Dictyosteliales</taxon>
        <taxon>Dictyosteliaceae</taxon>
        <taxon>Dictyostelium</taxon>
    </lineage>
</organism>